<gene>
    <name evidence="1" type="primary">eIF3a</name>
    <name evidence="1" type="synonym">eIF3-S10</name>
    <name evidence="8" type="ORF">CG9805</name>
</gene>
<reference key="1">
    <citation type="journal article" date="2000" name="Science">
        <title>The genome sequence of Drosophila melanogaster.</title>
        <authorList>
            <person name="Adams M.D."/>
            <person name="Celniker S.E."/>
            <person name="Holt R.A."/>
            <person name="Evans C.A."/>
            <person name="Gocayne J.D."/>
            <person name="Amanatides P.G."/>
            <person name="Scherer S.E."/>
            <person name="Li P.W."/>
            <person name="Hoskins R.A."/>
            <person name="Galle R.F."/>
            <person name="George R.A."/>
            <person name="Lewis S.E."/>
            <person name="Richards S."/>
            <person name="Ashburner M."/>
            <person name="Henderson S.N."/>
            <person name="Sutton G.G."/>
            <person name="Wortman J.R."/>
            <person name="Yandell M.D."/>
            <person name="Zhang Q."/>
            <person name="Chen L.X."/>
            <person name="Brandon R.C."/>
            <person name="Rogers Y.-H.C."/>
            <person name="Blazej R.G."/>
            <person name="Champe M."/>
            <person name="Pfeiffer B.D."/>
            <person name="Wan K.H."/>
            <person name="Doyle C."/>
            <person name="Baxter E.G."/>
            <person name="Helt G."/>
            <person name="Nelson C.R."/>
            <person name="Miklos G.L.G."/>
            <person name="Abril J.F."/>
            <person name="Agbayani A."/>
            <person name="An H.-J."/>
            <person name="Andrews-Pfannkoch C."/>
            <person name="Baldwin D."/>
            <person name="Ballew R.M."/>
            <person name="Basu A."/>
            <person name="Baxendale J."/>
            <person name="Bayraktaroglu L."/>
            <person name="Beasley E.M."/>
            <person name="Beeson K.Y."/>
            <person name="Benos P.V."/>
            <person name="Berman B.P."/>
            <person name="Bhandari D."/>
            <person name="Bolshakov S."/>
            <person name="Borkova D."/>
            <person name="Botchan M.R."/>
            <person name="Bouck J."/>
            <person name="Brokstein P."/>
            <person name="Brottier P."/>
            <person name="Burtis K.C."/>
            <person name="Busam D.A."/>
            <person name="Butler H."/>
            <person name="Cadieu E."/>
            <person name="Center A."/>
            <person name="Chandra I."/>
            <person name="Cherry J.M."/>
            <person name="Cawley S."/>
            <person name="Dahlke C."/>
            <person name="Davenport L.B."/>
            <person name="Davies P."/>
            <person name="de Pablos B."/>
            <person name="Delcher A."/>
            <person name="Deng Z."/>
            <person name="Mays A.D."/>
            <person name="Dew I."/>
            <person name="Dietz S.M."/>
            <person name="Dodson K."/>
            <person name="Doup L.E."/>
            <person name="Downes M."/>
            <person name="Dugan-Rocha S."/>
            <person name="Dunkov B.C."/>
            <person name="Dunn P."/>
            <person name="Durbin K.J."/>
            <person name="Evangelista C.C."/>
            <person name="Ferraz C."/>
            <person name="Ferriera S."/>
            <person name="Fleischmann W."/>
            <person name="Fosler C."/>
            <person name="Gabrielian A.E."/>
            <person name="Garg N.S."/>
            <person name="Gelbart W.M."/>
            <person name="Glasser K."/>
            <person name="Glodek A."/>
            <person name="Gong F."/>
            <person name="Gorrell J.H."/>
            <person name="Gu Z."/>
            <person name="Guan P."/>
            <person name="Harris M."/>
            <person name="Harris N.L."/>
            <person name="Harvey D.A."/>
            <person name="Heiman T.J."/>
            <person name="Hernandez J.R."/>
            <person name="Houck J."/>
            <person name="Hostin D."/>
            <person name="Houston K.A."/>
            <person name="Howland T.J."/>
            <person name="Wei M.-H."/>
            <person name="Ibegwam C."/>
            <person name="Jalali M."/>
            <person name="Kalush F."/>
            <person name="Karpen G.H."/>
            <person name="Ke Z."/>
            <person name="Kennison J.A."/>
            <person name="Ketchum K.A."/>
            <person name="Kimmel B.E."/>
            <person name="Kodira C.D."/>
            <person name="Kraft C.L."/>
            <person name="Kravitz S."/>
            <person name="Kulp D."/>
            <person name="Lai Z."/>
            <person name="Lasko P."/>
            <person name="Lei Y."/>
            <person name="Levitsky A.A."/>
            <person name="Li J.H."/>
            <person name="Li Z."/>
            <person name="Liang Y."/>
            <person name="Lin X."/>
            <person name="Liu X."/>
            <person name="Mattei B."/>
            <person name="McIntosh T.C."/>
            <person name="McLeod M.P."/>
            <person name="McPherson D."/>
            <person name="Merkulov G."/>
            <person name="Milshina N.V."/>
            <person name="Mobarry C."/>
            <person name="Morris J."/>
            <person name="Moshrefi A."/>
            <person name="Mount S.M."/>
            <person name="Moy M."/>
            <person name="Murphy B."/>
            <person name="Murphy L."/>
            <person name="Muzny D.M."/>
            <person name="Nelson D.L."/>
            <person name="Nelson D.R."/>
            <person name="Nelson K.A."/>
            <person name="Nixon K."/>
            <person name="Nusskern D.R."/>
            <person name="Pacleb J.M."/>
            <person name="Palazzolo M."/>
            <person name="Pittman G.S."/>
            <person name="Pan S."/>
            <person name="Pollard J."/>
            <person name="Puri V."/>
            <person name="Reese M.G."/>
            <person name="Reinert K."/>
            <person name="Remington K."/>
            <person name="Saunders R.D.C."/>
            <person name="Scheeler F."/>
            <person name="Shen H."/>
            <person name="Shue B.C."/>
            <person name="Siden-Kiamos I."/>
            <person name="Simpson M."/>
            <person name="Skupski M.P."/>
            <person name="Smith T.J."/>
            <person name="Spier E."/>
            <person name="Spradling A.C."/>
            <person name="Stapleton M."/>
            <person name="Strong R."/>
            <person name="Sun E."/>
            <person name="Svirskas R."/>
            <person name="Tector C."/>
            <person name="Turner R."/>
            <person name="Venter E."/>
            <person name="Wang A.H."/>
            <person name="Wang X."/>
            <person name="Wang Z.-Y."/>
            <person name="Wassarman D.A."/>
            <person name="Weinstock G.M."/>
            <person name="Weissenbach J."/>
            <person name="Williams S.M."/>
            <person name="Woodage T."/>
            <person name="Worley K.C."/>
            <person name="Wu D."/>
            <person name="Yang S."/>
            <person name="Yao Q.A."/>
            <person name="Ye J."/>
            <person name="Yeh R.-F."/>
            <person name="Zaveri J.S."/>
            <person name="Zhan M."/>
            <person name="Zhang G."/>
            <person name="Zhao Q."/>
            <person name="Zheng L."/>
            <person name="Zheng X.H."/>
            <person name="Zhong F.N."/>
            <person name="Zhong W."/>
            <person name="Zhou X."/>
            <person name="Zhu S.C."/>
            <person name="Zhu X."/>
            <person name="Smith H.O."/>
            <person name="Gibbs R.A."/>
            <person name="Myers E.W."/>
            <person name="Rubin G.M."/>
            <person name="Venter J.C."/>
        </authorList>
    </citation>
    <scope>NUCLEOTIDE SEQUENCE [LARGE SCALE GENOMIC DNA]</scope>
    <source>
        <strain>Berkeley</strain>
    </source>
</reference>
<reference key="2">
    <citation type="journal article" date="2002" name="Genome Biol.">
        <title>Annotation of the Drosophila melanogaster euchromatic genome: a systematic review.</title>
        <authorList>
            <person name="Misra S."/>
            <person name="Crosby M.A."/>
            <person name="Mungall C.J."/>
            <person name="Matthews B.B."/>
            <person name="Campbell K.S."/>
            <person name="Hradecky P."/>
            <person name="Huang Y."/>
            <person name="Kaminker J.S."/>
            <person name="Millburn G.H."/>
            <person name="Prochnik S.E."/>
            <person name="Smith C.D."/>
            <person name="Tupy J.L."/>
            <person name="Whitfield E.J."/>
            <person name="Bayraktaroglu L."/>
            <person name="Berman B.P."/>
            <person name="Bettencourt B.R."/>
            <person name="Celniker S.E."/>
            <person name="de Grey A.D.N.J."/>
            <person name="Drysdale R.A."/>
            <person name="Harris N.L."/>
            <person name="Richter J."/>
            <person name="Russo S."/>
            <person name="Schroeder A.J."/>
            <person name="Shu S.Q."/>
            <person name="Stapleton M."/>
            <person name="Yamada C."/>
            <person name="Ashburner M."/>
            <person name="Gelbart W.M."/>
            <person name="Rubin G.M."/>
            <person name="Lewis S.E."/>
        </authorList>
    </citation>
    <scope>GENOME REANNOTATION</scope>
    <source>
        <strain>Berkeley</strain>
    </source>
</reference>
<reference key="3">
    <citation type="journal article" date="2002" name="Genome Biol.">
        <title>A Drosophila full-length cDNA resource.</title>
        <authorList>
            <person name="Stapleton M."/>
            <person name="Carlson J.W."/>
            <person name="Brokstein P."/>
            <person name="Yu C."/>
            <person name="Champe M."/>
            <person name="George R.A."/>
            <person name="Guarin H."/>
            <person name="Kronmiller B."/>
            <person name="Pacleb J.M."/>
            <person name="Park S."/>
            <person name="Wan K.H."/>
            <person name="Rubin G.M."/>
            <person name="Celniker S.E."/>
        </authorList>
    </citation>
    <scope>NUCLEOTIDE SEQUENCE [LARGE SCALE MRNA] (ISOFORMS A AND B)</scope>
    <source>
        <strain>Berkeley</strain>
        <tissue>Embryo</tissue>
    </source>
</reference>
<reference key="4">
    <citation type="submission" date="2005-08" db="EMBL/GenBank/DDBJ databases">
        <authorList>
            <person name="Stapleton M."/>
            <person name="Carlson J.W."/>
            <person name="Chavez C."/>
            <person name="Frise E."/>
            <person name="George R.A."/>
            <person name="Pacleb J.M."/>
            <person name="Park S."/>
            <person name="Wan K.H."/>
            <person name="Yu C."/>
            <person name="Celniker S.E."/>
        </authorList>
    </citation>
    <scope>NUCLEOTIDE SEQUENCE [LARGE SCALE MRNA] OF 495-1140</scope>
    <source>
        <strain>Berkeley</strain>
        <tissue>Embryo</tissue>
    </source>
</reference>
<reference key="5">
    <citation type="journal article" date="2007" name="J. Biol. Chem.">
        <title>The essential Drosophila ATP-binding cassette domain protein, pixie, binds the 40 S ribosome in an ATP-dependent manner and is required for translation initiation.</title>
        <authorList>
            <person name="Andersen D.S."/>
            <person name="Leevers S.J."/>
        </authorList>
    </citation>
    <scope>INTERACTION WITH PIX</scope>
</reference>
<reference key="6">
    <citation type="journal article" date="2008" name="J. Proteome Res.">
        <title>Phosphoproteome analysis of Drosophila melanogaster embryos.</title>
        <authorList>
            <person name="Zhai B."/>
            <person name="Villen J."/>
            <person name="Beausoleil S.A."/>
            <person name="Mintseris J."/>
            <person name="Gygi S.P."/>
        </authorList>
    </citation>
    <scope>PHOSPHORYLATION [LARGE SCALE ANALYSIS] AT SER-908</scope>
    <scope>IDENTIFICATION BY MASS SPECTROMETRY</scope>
    <source>
        <tissue>Embryo</tissue>
    </source>
</reference>
<protein>
    <recommendedName>
        <fullName evidence="1">Eukaryotic translation initiation factor 3 subunit A</fullName>
        <shortName evidence="1">eIF3a</shortName>
    </recommendedName>
    <alternativeName>
        <fullName evidence="1">Eukaryotic translation initiation factor 3 subunit 10</fullName>
    </alternativeName>
</protein>
<feature type="chain" id="PRO_0000366337" description="Eukaryotic translation initiation factor 3 subunit A">
    <location>
        <begin position="1"/>
        <end position="1140"/>
    </location>
</feature>
<feature type="domain" description="PCI" evidence="2">
    <location>
        <begin position="319"/>
        <end position="501"/>
    </location>
</feature>
<feature type="region of interest" description="Disordered" evidence="3">
    <location>
        <begin position="588"/>
        <end position="630"/>
    </location>
</feature>
<feature type="region of interest" description="Disordered" evidence="3">
    <location>
        <begin position="829"/>
        <end position="1140"/>
    </location>
</feature>
<feature type="compositionally biased region" description="Basic and acidic residues" evidence="3">
    <location>
        <begin position="588"/>
        <end position="623"/>
    </location>
</feature>
<feature type="compositionally biased region" description="Basic and acidic residues" evidence="3">
    <location>
        <begin position="829"/>
        <end position="899"/>
    </location>
</feature>
<feature type="compositionally biased region" description="Basic and acidic residues" evidence="3">
    <location>
        <begin position="920"/>
        <end position="976"/>
    </location>
</feature>
<feature type="compositionally biased region" description="Basic and acidic residues" evidence="3">
    <location>
        <begin position="990"/>
        <end position="1051"/>
    </location>
</feature>
<feature type="compositionally biased region" description="Basic and acidic residues" evidence="3">
    <location>
        <begin position="1059"/>
        <end position="1086"/>
    </location>
</feature>
<feature type="compositionally biased region" description="Basic and acidic residues" evidence="3">
    <location>
        <begin position="1109"/>
        <end position="1130"/>
    </location>
</feature>
<feature type="modified residue" description="Phosphoserine" evidence="1 5">
    <location>
        <position position="908"/>
    </location>
</feature>
<feature type="splice variant" id="VSP_036575" description="In isoform B." evidence="6">
    <location>
        <begin position="163"/>
        <end position="230"/>
    </location>
</feature>
<feature type="sequence conflict" description="In Ref. 3; AAL49223." evidence="7" ref="3">
    <original>A</original>
    <variation>P</variation>
    <location>
        <position position="1106"/>
    </location>
</feature>
<feature type="sequence conflict" description="In Ref. 3; AAL49223." evidence="7" ref="3">
    <original>G</original>
    <variation>S</variation>
    <location>
        <position position="1132"/>
    </location>
</feature>
<organism>
    <name type="scientific">Drosophila melanogaster</name>
    <name type="common">Fruit fly</name>
    <dbReference type="NCBI Taxonomy" id="7227"/>
    <lineage>
        <taxon>Eukaryota</taxon>
        <taxon>Metazoa</taxon>
        <taxon>Ecdysozoa</taxon>
        <taxon>Arthropoda</taxon>
        <taxon>Hexapoda</taxon>
        <taxon>Insecta</taxon>
        <taxon>Pterygota</taxon>
        <taxon>Neoptera</taxon>
        <taxon>Endopterygota</taxon>
        <taxon>Diptera</taxon>
        <taxon>Brachycera</taxon>
        <taxon>Muscomorpha</taxon>
        <taxon>Ephydroidea</taxon>
        <taxon>Drosophilidae</taxon>
        <taxon>Drosophila</taxon>
        <taxon>Sophophora</taxon>
    </lineage>
</organism>
<accession>Q9VN25</accession>
<accession>Q0KID1</accession>
<accession>Q494J3</accession>
<accession>Q8IH03</accession>
<accession>Q8SYE5</accession>
<sequence length="1140" mass="133880">MARYTQRPENALKRANEFIEVGKPLRALDTLQEVFRNKRWNYAYSETVIEPLMFKYLYLCVELKKSHIAKEGLFQYRNMFQLVNVNSLENVIRGYLKMAEEHTEAAQAQSSAAVAVLELDDLDNIATPESILMSAVCGEDAQDRSDRTILLPWVKFLWESYCQCLELLRVNTHCEALYHDIARMAFQFCLKYNRKSEFRRLCDKLRKHLEDICKSSNQTTGVSINKVETQQLCLDTRLYLLDSAIQMELWQEAYKAIEDIHGLMALSKKTPVPKTMANYYQKLAMVFSKAGNQLFHAAALLKLFQLTRELKKNLTKDDLQRMAAHVLLATLSIPLPSAHPEFDRFIEADKSPLEKAQKLAVLLGLPQPPTRVSLIREVVRLNVPQLVSEDFRNLYNWLEVDFNPLNLCKRIQSIVDFIENGPENALLTPYIQSLKDVTIMRLIRQISQVYESIKFQRLLQLASFCNIFELEKLLVESVRHNDMQIRIDHQKNSIYFGTDLTESQREYRPDGPALQSMPSEQIRSQLVNMSTVLTRAVSIVYPNRERDQRAKLRNQMVNHYHEIKDREHQRILQRQKIIEDRKEYIEKQNNAREEEEARRQEEESRKAKLAEQKRLEQEQEERERKRHQNEIQAIREKSLKEKVQQISQTAHGKKMLSKLDEEGIKKLDAEQIAKRESEELQREAKELQSKLKSQEKKIDYFERAKRLEEIPLFEKYLAEKQVKDKEFWEATEKTRIENAIAERKDAVAQQERLKRMYPDRDEFLEALKKERASLYVEKLKKFEAALEAERKKRLADRIIRRREERRQAFLREKEEERLRKEEEIRLAQAAEERAAAEARRLEREAEDEKRRAQYEKQRAKEEEAERKIKEDRDRLSRELASERERTEKDRDTWRPRGGDRPSASNGGSSEWRRAAPAASERNDRGGERIERGGERIERGGERLERGGERIERGGDRDRKDNEGADSSWRVRREPDSQRAAAPKDSGAPQSRDDKWRRGGERDRDFRIDGARRDRDDGPRRDRDDGPRRDRDDERGGFRRADGARRTDEPQRETGGNWRDAPRHADRETRRPAERRDRDVRETRGDQRGSAPKEAASGGVGGNWRTAPATREEKPAAKRDQAQEKENKAGDDGEWTSVKRR</sequence>
<name>EIF3A_DROME</name>
<dbReference type="EMBL" id="AE014297">
    <property type="protein sequence ID" value="AAF52126.1"/>
    <property type="molecule type" value="Genomic_DNA"/>
</dbReference>
<dbReference type="EMBL" id="AY071601">
    <property type="protein sequence ID" value="AAL49223.1"/>
    <property type="molecule type" value="mRNA"/>
</dbReference>
<dbReference type="EMBL" id="BT001505">
    <property type="protein sequence ID" value="AAN71260.1"/>
    <property type="status" value="ALT_INIT"/>
    <property type="molecule type" value="mRNA"/>
</dbReference>
<dbReference type="EMBL" id="BT023783">
    <property type="protein sequence ID" value="AAZ41792.1"/>
    <property type="molecule type" value="mRNA"/>
</dbReference>
<dbReference type="RefSeq" id="NP_649470.2">
    <molecule id="Q9VN25-1"/>
    <property type="nucleotide sequence ID" value="NM_141213.4"/>
</dbReference>
<dbReference type="RefSeq" id="NP_730838.3">
    <molecule id="Q9VN25-1"/>
    <property type="nucleotide sequence ID" value="NM_168999.3"/>
</dbReference>
<dbReference type="SMR" id="Q9VN25"/>
<dbReference type="BioGRID" id="65782">
    <property type="interactions" value="30"/>
</dbReference>
<dbReference type="FunCoup" id="Q9VN25">
    <property type="interactions" value="2568"/>
</dbReference>
<dbReference type="IntAct" id="Q9VN25">
    <property type="interactions" value="22"/>
</dbReference>
<dbReference type="MINT" id="Q9VN25"/>
<dbReference type="STRING" id="7227.FBpp0312226"/>
<dbReference type="iPTMnet" id="Q9VN25"/>
<dbReference type="PaxDb" id="7227-FBpp0078584"/>
<dbReference type="EnsemblMetazoa" id="FBtr0078944">
    <molecule id="Q9VN25-1"/>
    <property type="protein sequence ID" value="FBpp0078584"/>
    <property type="gene ID" value="FBgn0037249"/>
</dbReference>
<dbReference type="EnsemblMetazoa" id="FBtr0346646">
    <molecule id="Q9VN25-1"/>
    <property type="protein sequence ID" value="FBpp0312226"/>
    <property type="gene ID" value="FBgn0037249"/>
</dbReference>
<dbReference type="GeneID" id="40563"/>
<dbReference type="KEGG" id="dme:Dmel_CG9805"/>
<dbReference type="UCSC" id="CG9805-RA">
    <molecule id="Q9VN25-1"/>
    <property type="organism name" value="d. melanogaster"/>
</dbReference>
<dbReference type="UCSC" id="CG9805-RB">
    <property type="organism name" value="d. melanogaster"/>
</dbReference>
<dbReference type="AGR" id="FB:FBgn0037249"/>
<dbReference type="CTD" id="8661"/>
<dbReference type="FlyBase" id="FBgn0037249">
    <property type="gene designation" value="eIF3a"/>
</dbReference>
<dbReference type="VEuPathDB" id="VectorBase:FBgn0037249"/>
<dbReference type="eggNOG" id="KOG2072">
    <property type="taxonomic scope" value="Eukaryota"/>
</dbReference>
<dbReference type="GeneTree" id="ENSGT00730000111063"/>
<dbReference type="HOGENOM" id="CLU_002096_1_0_1"/>
<dbReference type="InParanoid" id="Q9VN25"/>
<dbReference type="OMA" id="EHITNKR"/>
<dbReference type="OrthoDB" id="18884at2759"/>
<dbReference type="PhylomeDB" id="Q9VN25"/>
<dbReference type="Reactome" id="R-DME-156827">
    <property type="pathway name" value="L13a-mediated translational silencing of Ceruloplasmin expression"/>
</dbReference>
<dbReference type="Reactome" id="R-DME-72649">
    <property type="pathway name" value="Translation initiation complex formation"/>
</dbReference>
<dbReference type="Reactome" id="R-DME-72689">
    <property type="pathway name" value="Formation of a pool of free 40S subunits"/>
</dbReference>
<dbReference type="Reactome" id="R-DME-72695">
    <property type="pathway name" value="Formation of the ternary complex, and subsequently, the 43S complex"/>
</dbReference>
<dbReference type="Reactome" id="R-DME-72702">
    <property type="pathway name" value="Ribosomal scanning and start codon recognition"/>
</dbReference>
<dbReference type="SignaLink" id="Q9VN25"/>
<dbReference type="BioGRID-ORCS" id="40563">
    <property type="hits" value="1 hit in 1 CRISPR screen"/>
</dbReference>
<dbReference type="ChiTaRS" id="eIF3-S10">
    <property type="organism name" value="fly"/>
</dbReference>
<dbReference type="GenomeRNAi" id="40563"/>
<dbReference type="PRO" id="PR:Q9VN25"/>
<dbReference type="Proteomes" id="UP000000803">
    <property type="component" value="Chromosome 3R"/>
</dbReference>
<dbReference type="Bgee" id="FBgn0037249">
    <property type="expression patterns" value="Expressed in eye disc (Drosophila) and 234 other cell types or tissues"/>
</dbReference>
<dbReference type="GO" id="GO:0005829">
    <property type="term" value="C:cytosol"/>
    <property type="evidence" value="ECO:0007005"/>
    <property type="project" value="FlyBase"/>
</dbReference>
<dbReference type="GO" id="GO:0016282">
    <property type="term" value="C:eukaryotic 43S preinitiation complex"/>
    <property type="evidence" value="ECO:0007669"/>
    <property type="project" value="UniProtKB-UniRule"/>
</dbReference>
<dbReference type="GO" id="GO:0033290">
    <property type="term" value="C:eukaryotic 48S preinitiation complex"/>
    <property type="evidence" value="ECO:0007669"/>
    <property type="project" value="UniProtKB-UniRule"/>
</dbReference>
<dbReference type="GO" id="GO:0005852">
    <property type="term" value="C:eukaryotic translation initiation factor 3 complex"/>
    <property type="evidence" value="ECO:0000250"/>
    <property type="project" value="UniProtKB"/>
</dbReference>
<dbReference type="GO" id="GO:0071540">
    <property type="term" value="C:eukaryotic translation initiation factor 3 complex, eIF3e"/>
    <property type="evidence" value="ECO:0000318"/>
    <property type="project" value="GO_Central"/>
</dbReference>
<dbReference type="GO" id="GO:0071541">
    <property type="term" value="C:eukaryotic translation initiation factor 3 complex, eIF3m"/>
    <property type="evidence" value="ECO:0000318"/>
    <property type="project" value="GO_Central"/>
</dbReference>
<dbReference type="GO" id="GO:0043614">
    <property type="term" value="C:multi-eIF complex"/>
    <property type="evidence" value="ECO:0000318"/>
    <property type="project" value="GO_Central"/>
</dbReference>
<dbReference type="GO" id="GO:0003729">
    <property type="term" value="F:mRNA binding"/>
    <property type="evidence" value="ECO:0000318"/>
    <property type="project" value="GO_Central"/>
</dbReference>
<dbReference type="GO" id="GO:0003743">
    <property type="term" value="F:translation initiation factor activity"/>
    <property type="evidence" value="ECO:0000250"/>
    <property type="project" value="UniProtKB"/>
</dbReference>
<dbReference type="GO" id="GO:0001732">
    <property type="term" value="P:formation of cytoplasmic translation initiation complex"/>
    <property type="evidence" value="ECO:0000318"/>
    <property type="project" value="GO_Central"/>
</dbReference>
<dbReference type="GO" id="GO:0006446">
    <property type="term" value="P:regulation of translational initiation"/>
    <property type="evidence" value="ECO:0000250"/>
    <property type="project" value="UniProtKB"/>
</dbReference>
<dbReference type="GO" id="GO:0002188">
    <property type="term" value="P:translation reinitiation"/>
    <property type="evidence" value="ECO:0000318"/>
    <property type="project" value="GO_Central"/>
</dbReference>
<dbReference type="GO" id="GO:0006413">
    <property type="term" value="P:translational initiation"/>
    <property type="evidence" value="ECO:0000250"/>
    <property type="project" value="FlyBase"/>
</dbReference>
<dbReference type="FunFam" id="1.25.40.860:FF:000007">
    <property type="entry name" value="Eukaryotic translation initiation factor 3 subunit A"/>
    <property type="match status" value="1"/>
</dbReference>
<dbReference type="FunFam" id="4.10.860.10:FF:000001">
    <property type="entry name" value="Eukaryotic translation initiation factor 3 subunit A"/>
    <property type="match status" value="1"/>
</dbReference>
<dbReference type="Gene3D" id="1.25.40.860">
    <property type="match status" value="2"/>
</dbReference>
<dbReference type="Gene3D" id="4.10.860.10">
    <property type="entry name" value="UVR domain"/>
    <property type="match status" value="1"/>
</dbReference>
<dbReference type="HAMAP" id="MF_03000">
    <property type="entry name" value="eIF3a"/>
    <property type="match status" value="1"/>
</dbReference>
<dbReference type="InterPro" id="IPR027512">
    <property type="entry name" value="EIF3A"/>
</dbReference>
<dbReference type="InterPro" id="IPR054711">
    <property type="entry name" value="eIF3a_PCI_TPR-like"/>
</dbReference>
<dbReference type="InterPro" id="IPR000717">
    <property type="entry name" value="PCI_dom"/>
</dbReference>
<dbReference type="PANTHER" id="PTHR14005:SF0">
    <property type="entry name" value="EUKARYOTIC TRANSLATION INITIATION FACTOR 3 SUBUNIT A"/>
    <property type="match status" value="1"/>
</dbReference>
<dbReference type="PANTHER" id="PTHR14005">
    <property type="entry name" value="EUKARYOTIC TRANSLATION INITIATION FACTOR 3, THETA SUBUNIT"/>
    <property type="match status" value="1"/>
</dbReference>
<dbReference type="Pfam" id="PF22591">
    <property type="entry name" value="eIF3a_PCI_TPR-like"/>
    <property type="match status" value="1"/>
</dbReference>
<dbReference type="Pfam" id="PF01399">
    <property type="entry name" value="PCI"/>
    <property type="match status" value="1"/>
</dbReference>
<dbReference type="PROSITE" id="PS50250">
    <property type="entry name" value="PCI"/>
    <property type="match status" value="1"/>
</dbReference>
<keyword id="KW-0025">Alternative splicing</keyword>
<keyword id="KW-0963">Cytoplasm</keyword>
<keyword id="KW-0396">Initiation factor</keyword>
<keyword id="KW-0597">Phosphoprotein</keyword>
<keyword id="KW-0648">Protein biosynthesis</keyword>
<keyword id="KW-1185">Reference proteome</keyword>
<keyword id="KW-0694">RNA-binding</keyword>
<proteinExistence type="evidence at protein level"/>
<comment type="function">
    <text evidence="1">RNA-binding component of the eukaryotic translation initiation factor 3 (eIF-3) complex, which is involved in protein synthesis of a specialized repertoire of mRNAs and, together with other initiation factors, stimulates binding of mRNA and methionyl-tRNAi to the 40S ribosome. The eIF-3 complex specifically targets and initiates translation of a subset of mRNAs involved in cell proliferation.</text>
</comment>
<comment type="subunit">
    <text evidence="1 4">Component of the eukaryotic translation initiation factor 3 (eIF-3) complex (By similarity) (PubMed:17392269). The eIF-3 complex interacts with pix (By similarity) (PubMed:17392269).</text>
</comment>
<comment type="subcellular location">
    <subcellularLocation>
        <location evidence="1">Cytoplasm</location>
    </subcellularLocation>
</comment>
<comment type="alternative products">
    <event type="alternative splicing"/>
    <isoform>
        <id>Q9VN25-1</id>
        <name>A</name>
        <sequence type="displayed"/>
    </isoform>
    <isoform>
        <id>Q9VN25-2</id>
        <name>B</name>
        <sequence type="described" ref="VSP_036575"/>
    </isoform>
</comment>
<comment type="similarity">
    <text evidence="1">Belongs to the eIF-3 subunit A family.</text>
</comment>
<comment type="sequence caution" evidence="7">
    <conflict type="erroneous initiation">
        <sequence resource="EMBL-CDS" id="AAN71260"/>
    </conflict>
    <text>Truncated N-terminus.</text>
</comment>
<evidence type="ECO:0000255" key="1">
    <source>
        <dbReference type="HAMAP-Rule" id="MF_03000"/>
    </source>
</evidence>
<evidence type="ECO:0000255" key="2">
    <source>
        <dbReference type="PROSITE-ProRule" id="PRU01185"/>
    </source>
</evidence>
<evidence type="ECO:0000256" key="3">
    <source>
        <dbReference type="SAM" id="MobiDB-lite"/>
    </source>
</evidence>
<evidence type="ECO:0000269" key="4">
    <source>
    </source>
</evidence>
<evidence type="ECO:0000269" key="5">
    <source>
    </source>
</evidence>
<evidence type="ECO:0000303" key="6">
    <source>
    </source>
</evidence>
<evidence type="ECO:0000305" key="7"/>
<evidence type="ECO:0000312" key="8">
    <source>
        <dbReference type="FlyBase" id="FBgn0037249"/>
    </source>
</evidence>